<protein>
    <recommendedName>
        <fullName evidence="1">DNA-directed RNA polymerase subunit alpha</fullName>
        <shortName evidence="1">RNAP subunit alpha</shortName>
        <ecNumber evidence="1">2.7.7.6</ecNumber>
    </recommendedName>
    <alternativeName>
        <fullName evidence="1">RNA polymerase subunit alpha</fullName>
    </alternativeName>
    <alternativeName>
        <fullName evidence="1">Transcriptase subunit alpha</fullName>
    </alternativeName>
</protein>
<sequence length="312" mass="34433">MIEFEKPIITKIDENKDYGKFVIEPLERGYGTTLGNSLRRVLLSSLPGAAVTSIKIDGVLHEFDTVPGVREDVMQIILNIKGLAVKSYVEDEKTIELDVQGPAEVTAGDILTDSDIEIVNPDHYLFTIAEGASFQATMTVSTNRGYVPAEENKKDDAPVGTLAVDSIYTPVKKVNYQVEPARVGSNDGFDKLTIEIVTNGTIIPEDALGLSARILIEHLNLFTDLTDVAKATDVMKETEKVNDEKLLDRTIEELDLSVRSYNCLKRAGINTVHDLTEKTEPEMMKVRNLGRKSLEEVKVKLADLGLGLKNDK</sequence>
<gene>
    <name evidence="1" type="primary">rpoA</name>
    <name type="ordered locus">stu1908</name>
</gene>
<name>RPOA_STRT2</name>
<dbReference type="EC" id="2.7.7.6" evidence="1"/>
<dbReference type="EMBL" id="CP000023">
    <property type="protein sequence ID" value="AAV61506.1"/>
    <property type="molecule type" value="Genomic_DNA"/>
</dbReference>
<dbReference type="RefSeq" id="WP_002952135.1">
    <property type="nucleotide sequence ID" value="NC_006448.1"/>
</dbReference>
<dbReference type="SMR" id="Q5M2D9"/>
<dbReference type="STRING" id="264199.stu1908"/>
<dbReference type="KEGG" id="stl:stu1908"/>
<dbReference type="eggNOG" id="COG0202">
    <property type="taxonomic scope" value="Bacteria"/>
</dbReference>
<dbReference type="HOGENOM" id="CLU_053084_0_1_9"/>
<dbReference type="Proteomes" id="UP000001170">
    <property type="component" value="Chromosome"/>
</dbReference>
<dbReference type="GO" id="GO:0005737">
    <property type="term" value="C:cytoplasm"/>
    <property type="evidence" value="ECO:0007669"/>
    <property type="project" value="UniProtKB-ARBA"/>
</dbReference>
<dbReference type="GO" id="GO:0000428">
    <property type="term" value="C:DNA-directed RNA polymerase complex"/>
    <property type="evidence" value="ECO:0007669"/>
    <property type="project" value="UniProtKB-KW"/>
</dbReference>
<dbReference type="GO" id="GO:0003677">
    <property type="term" value="F:DNA binding"/>
    <property type="evidence" value="ECO:0007669"/>
    <property type="project" value="UniProtKB-UniRule"/>
</dbReference>
<dbReference type="GO" id="GO:0003899">
    <property type="term" value="F:DNA-directed RNA polymerase activity"/>
    <property type="evidence" value="ECO:0007669"/>
    <property type="project" value="UniProtKB-UniRule"/>
</dbReference>
<dbReference type="GO" id="GO:0046983">
    <property type="term" value="F:protein dimerization activity"/>
    <property type="evidence" value="ECO:0007669"/>
    <property type="project" value="InterPro"/>
</dbReference>
<dbReference type="GO" id="GO:0006351">
    <property type="term" value="P:DNA-templated transcription"/>
    <property type="evidence" value="ECO:0007669"/>
    <property type="project" value="UniProtKB-UniRule"/>
</dbReference>
<dbReference type="CDD" id="cd06928">
    <property type="entry name" value="RNAP_alpha_NTD"/>
    <property type="match status" value="1"/>
</dbReference>
<dbReference type="FunFam" id="1.10.150.20:FF:000001">
    <property type="entry name" value="DNA-directed RNA polymerase subunit alpha"/>
    <property type="match status" value="1"/>
</dbReference>
<dbReference type="FunFam" id="2.170.120.12:FF:000001">
    <property type="entry name" value="DNA-directed RNA polymerase subunit alpha"/>
    <property type="match status" value="1"/>
</dbReference>
<dbReference type="Gene3D" id="1.10.150.20">
    <property type="entry name" value="5' to 3' exonuclease, C-terminal subdomain"/>
    <property type="match status" value="1"/>
</dbReference>
<dbReference type="Gene3D" id="2.170.120.12">
    <property type="entry name" value="DNA-directed RNA polymerase, insert domain"/>
    <property type="match status" value="1"/>
</dbReference>
<dbReference type="Gene3D" id="3.30.1360.10">
    <property type="entry name" value="RNA polymerase, RBP11-like subunit"/>
    <property type="match status" value="1"/>
</dbReference>
<dbReference type="HAMAP" id="MF_00059">
    <property type="entry name" value="RNApol_bact_RpoA"/>
    <property type="match status" value="1"/>
</dbReference>
<dbReference type="InterPro" id="IPR011262">
    <property type="entry name" value="DNA-dir_RNA_pol_insert"/>
</dbReference>
<dbReference type="InterPro" id="IPR011263">
    <property type="entry name" value="DNA-dir_RNA_pol_RpoA/D/Rpb3"/>
</dbReference>
<dbReference type="InterPro" id="IPR011773">
    <property type="entry name" value="DNA-dir_RpoA"/>
</dbReference>
<dbReference type="InterPro" id="IPR036603">
    <property type="entry name" value="RBP11-like"/>
</dbReference>
<dbReference type="InterPro" id="IPR011260">
    <property type="entry name" value="RNAP_asu_C"/>
</dbReference>
<dbReference type="InterPro" id="IPR036643">
    <property type="entry name" value="RNApol_insert_sf"/>
</dbReference>
<dbReference type="NCBIfam" id="NF003513">
    <property type="entry name" value="PRK05182.1-2"/>
    <property type="match status" value="1"/>
</dbReference>
<dbReference type="NCBIfam" id="NF003515">
    <property type="entry name" value="PRK05182.2-1"/>
    <property type="match status" value="1"/>
</dbReference>
<dbReference type="NCBIfam" id="NF003516">
    <property type="entry name" value="PRK05182.2-2"/>
    <property type="match status" value="1"/>
</dbReference>
<dbReference type="NCBIfam" id="NF003518">
    <property type="entry name" value="PRK05182.2-4"/>
    <property type="match status" value="1"/>
</dbReference>
<dbReference type="NCBIfam" id="NF003519">
    <property type="entry name" value="PRK05182.2-5"/>
    <property type="match status" value="1"/>
</dbReference>
<dbReference type="NCBIfam" id="TIGR02027">
    <property type="entry name" value="rpoA"/>
    <property type="match status" value="1"/>
</dbReference>
<dbReference type="Pfam" id="PF01000">
    <property type="entry name" value="RNA_pol_A_bac"/>
    <property type="match status" value="1"/>
</dbReference>
<dbReference type="Pfam" id="PF03118">
    <property type="entry name" value="RNA_pol_A_CTD"/>
    <property type="match status" value="1"/>
</dbReference>
<dbReference type="Pfam" id="PF01193">
    <property type="entry name" value="RNA_pol_L"/>
    <property type="match status" value="1"/>
</dbReference>
<dbReference type="SMART" id="SM00662">
    <property type="entry name" value="RPOLD"/>
    <property type="match status" value="1"/>
</dbReference>
<dbReference type="SUPFAM" id="SSF47789">
    <property type="entry name" value="C-terminal domain of RNA polymerase alpha subunit"/>
    <property type="match status" value="1"/>
</dbReference>
<dbReference type="SUPFAM" id="SSF56553">
    <property type="entry name" value="Insert subdomain of RNA polymerase alpha subunit"/>
    <property type="match status" value="1"/>
</dbReference>
<dbReference type="SUPFAM" id="SSF55257">
    <property type="entry name" value="RBP11-like subunits of RNA polymerase"/>
    <property type="match status" value="1"/>
</dbReference>
<proteinExistence type="inferred from homology"/>
<keyword id="KW-0240">DNA-directed RNA polymerase</keyword>
<keyword id="KW-0548">Nucleotidyltransferase</keyword>
<keyword id="KW-1185">Reference proteome</keyword>
<keyword id="KW-0804">Transcription</keyword>
<keyword id="KW-0808">Transferase</keyword>
<evidence type="ECO:0000255" key="1">
    <source>
        <dbReference type="HAMAP-Rule" id="MF_00059"/>
    </source>
</evidence>
<organism>
    <name type="scientific">Streptococcus thermophilus (strain ATCC BAA-250 / LMG 18311)</name>
    <dbReference type="NCBI Taxonomy" id="264199"/>
    <lineage>
        <taxon>Bacteria</taxon>
        <taxon>Bacillati</taxon>
        <taxon>Bacillota</taxon>
        <taxon>Bacilli</taxon>
        <taxon>Lactobacillales</taxon>
        <taxon>Streptococcaceae</taxon>
        <taxon>Streptococcus</taxon>
    </lineage>
</organism>
<comment type="function">
    <text evidence="1">DNA-dependent RNA polymerase catalyzes the transcription of DNA into RNA using the four ribonucleoside triphosphates as substrates.</text>
</comment>
<comment type="catalytic activity">
    <reaction evidence="1">
        <text>RNA(n) + a ribonucleoside 5'-triphosphate = RNA(n+1) + diphosphate</text>
        <dbReference type="Rhea" id="RHEA:21248"/>
        <dbReference type="Rhea" id="RHEA-COMP:14527"/>
        <dbReference type="Rhea" id="RHEA-COMP:17342"/>
        <dbReference type="ChEBI" id="CHEBI:33019"/>
        <dbReference type="ChEBI" id="CHEBI:61557"/>
        <dbReference type="ChEBI" id="CHEBI:140395"/>
        <dbReference type="EC" id="2.7.7.6"/>
    </reaction>
</comment>
<comment type="subunit">
    <text evidence="1">Homodimer. The RNAP catalytic core consists of 2 alpha, 1 beta, 1 beta' and 1 omega subunit. When a sigma factor is associated with the core the holoenzyme is formed, which can initiate transcription.</text>
</comment>
<comment type="domain">
    <text evidence="1">The N-terminal domain is essential for RNAP assembly and basal transcription, whereas the C-terminal domain is involved in interaction with transcriptional regulators and with upstream promoter elements.</text>
</comment>
<comment type="similarity">
    <text evidence="1">Belongs to the RNA polymerase alpha chain family.</text>
</comment>
<accession>Q5M2D9</accession>
<feature type="chain" id="PRO_0000225307" description="DNA-directed RNA polymerase subunit alpha">
    <location>
        <begin position="1"/>
        <end position="312"/>
    </location>
</feature>
<feature type="region of interest" description="Alpha N-terminal domain (alpha-NTD)" evidence="1">
    <location>
        <begin position="1"/>
        <end position="226"/>
    </location>
</feature>
<feature type="region of interest" description="Alpha C-terminal domain (alpha-CTD)" evidence="1">
    <location>
        <begin position="242"/>
        <end position="312"/>
    </location>
</feature>
<reference key="1">
    <citation type="journal article" date="2004" name="Nat. Biotechnol.">
        <title>Complete sequence and comparative genome analysis of the dairy bacterium Streptococcus thermophilus.</title>
        <authorList>
            <person name="Bolotin A."/>
            <person name="Quinquis B."/>
            <person name="Renault P."/>
            <person name="Sorokin A."/>
            <person name="Ehrlich S.D."/>
            <person name="Kulakauskas S."/>
            <person name="Lapidus A."/>
            <person name="Goltsman E."/>
            <person name="Mazur M."/>
            <person name="Pusch G.D."/>
            <person name="Fonstein M."/>
            <person name="Overbeek R."/>
            <person name="Kyprides N."/>
            <person name="Purnelle B."/>
            <person name="Prozzi D."/>
            <person name="Ngui K."/>
            <person name="Masuy D."/>
            <person name="Hancy F."/>
            <person name="Burteau S."/>
            <person name="Boutry M."/>
            <person name="Delcour J."/>
            <person name="Goffeau A."/>
            <person name="Hols P."/>
        </authorList>
    </citation>
    <scope>NUCLEOTIDE SEQUENCE [LARGE SCALE GENOMIC DNA]</scope>
    <source>
        <strain>ATCC BAA-250 / LMG 18311</strain>
    </source>
</reference>